<name>SAMP_MESAU</name>
<organism>
    <name type="scientific">Mesocricetus auratus</name>
    <name type="common">Golden hamster</name>
    <dbReference type="NCBI Taxonomy" id="10036"/>
    <lineage>
        <taxon>Eukaryota</taxon>
        <taxon>Metazoa</taxon>
        <taxon>Chordata</taxon>
        <taxon>Craniata</taxon>
        <taxon>Vertebrata</taxon>
        <taxon>Euteleostomi</taxon>
        <taxon>Mammalia</taxon>
        <taxon>Eutheria</taxon>
        <taxon>Euarchontoglires</taxon>
        <taxon>Glires</taxon>
        <taxon>Rodentia</taxon>
        <taxon>Myomorpha</taxon>
        <taxon>Muroidea</taxon>
        <taxon>Cricetidae</taxon>
        <taxon>Cricetinae</taxon>
        <taxon>Mesocricetus</taxon>
    </lineage>
</organism>
<sequence length="234" mass="26463">MDKLLSLLGVSILAGLLLEAFAQTDLTGKVFVFPRQSETDYVKLIPRLDKPLQNFTVCFRAYSDLSRPHSLFSYNAEYGENELLIYKERIGEYELYIGNQGTKVHGVEEFASPVHFCTSWESSSGIAEFWVNGKPWVKKGLQKGYTVKNKPSIILGQEQDNYGGGFDNYQSFVGEIGDLNMWDSVLTPEEIKSVYQGVPLEPNILDWQALNYEMNGYAVIRPRCVALSSYNKIS</sequence>
<accession>P07629</accession>
<dbReference type="EMBL" id="L22024">
    <property type="protein sequence ID" value="AAA03577.1"/>
    <property type="molecule type" value="Unassigned_DNA"/>
</dbReference>
<dbReference type="EMBL" id="M11342">
    <property type="protein sequence ID" value="AAA36980.1"/>
    <property type="molecule type" value="mRNA"/>
</dbReference>
<dbReference type="PIR" id="A19828">
    <property type="entry name" value="A19828"/>
</dbReference>
<dbReference type="PIR" id="A44177">
    <property type="entry name" value="A44177"/>
</dbReference>
<dbReference type="PIR" id="A48593">
    <property type="entry name" value="A48593"/>
</dbReference>
<dbReference type="SMR" id="P07629"/>
<dbReference type="STRING" id="10036.ENSMAUP00000010068"/>
<dbReference type="UniLectin" id="P07629"/>
<dbReference type="GlyCosmos" id="P07629">
    <property type="glycosylation" value="1 site, No reported glycans"/>
</dbReference>
<dbReference type="eggNOG" id="ENOG502S201">
    <property type="taxonomic scope" value="Eukaryota"/>
</dbReference>
<dbReference type="Proteomes" id="UP000189706">
    <property type="component" value="Unplaced"/>
</dbReference>
<dbReference type="GO" id="GO:0005615">
    <property type="term" value="C:extracellular space"/>
    <property type="evidence" value="ECO:0007669"/>
    <property type="project" value="TreeGrafter"/>
</dbReference>
<dbReference type="GO" id="GO:0030246">
    <property type="term" value="F:carbohydrate binding"/>
    <property type="evidence" value="ECO:0007669"/>
    <property type="project" value="UniProtKB-KW"/>
</dbReference>
<dbReference type="GO" id="GO:0001849">
    <property type="term" value="F:complement component C1q complex binding"/>
    <property type="evidence" value="ECO:0007669"/>
    <property type="project" value="TreeGrafter"/>
</dbReference>
<dbReference type="GO" id="GO:0046872">
    <property type="term" value="F:metal ion binding"/>
    <property type="evidence" value="ECO:0007669"/>
    <property type="project" value="UniProtKB-KW"/>
</dbReference>
<dbReference type="GO" id="GO:0006953">
    <property type="term" value="P:acute-phase response"/>
    <property type="evidence" value="ECO:0007669"/>
    <property type="project" value="UniProtKB-KW"/>
</dbReference>
<dbReference type="GO" id="GO:0045087">
    <property type="term" value="P:innate immune response"/>
    <property type="evidence" value="ECO:0007669"/>
    <property type="project" value="TreeGrafter"/>
</dbReference>
<dbReference type="CDD" id="cd00152">
    <property type="entry name" value="PTX"/>
    <property type="match status" value="1"/>
</dbReference>
<dbReference type="FunFam" id="2.60.120.200:FF:000070">
    <property type="entry name" value="Serum amyloid P-component"/>
    <property type="match status" value="1"/>
</dbReference>
<dbReference type="Gene3D" id="2.60.120.200">
    <property type="match status" value="1"/>
</dbReference>
<dbReference type="InterPro" id="IPR013320">
    <property type="entry name" value="ConA-like_dom_sf"/>
</dbReference>
<dbReference type="InterPro" id="IPR030476">
    <property type="entry name" value="Pentaxin_CS"/>
</dbReference>
<dbReference type="InterPro" id="IPR001759">
    <property type="entry name" value="Pentraxin-related"/>
</dbReference>
<dbReference type="InterPro" id="IPR051005">
    <property type="entry name" value="Pentraxin_domain"/>
</dbReference>
<dbReference type="PANTHER" id="PTHR45869">
    <property type="entry name" value="C-REACTIVE PROTEIN-RELATED"/>
    <property type="match status" value="1"/>
</dbReference>
<dbReference type="PANTHER" id="PTHR45869:SF5">
    <property type="entry name" value="SERUM AMYLOID P-COMPONENT"/>
    <property type="match status" value="1"/>
</dbReference>
<dbReference type="Pfam" id="PF00354">
    <property type="entry name" value="Pentaxin"/>
    <property type="match status" value="1"/>
</dbReference>
<dbReference type="PRINTS" id="PR00895">
    <property type="entry name" value="PENTAXIN"/>
</dbReference>
<dbReference type="SMART" id="SM00159">
    <property type="entry name" value="PTX"/>
    <property type="match status" value="1"/>
</dbReference>
<dbReference type="SUPFAM" id="SSF49899">
    <property type="entry name" value="Concanavalin A-like lectins/glucanases"/>
    <property type="match status" value="1"/>
</dbReference>
<dbReference type="PROSITE" id="PS00289">
    <property type="entry name" value="PTX_1"/>
    <property type="match status" value="1"/>
</dbReference>
<dbReference type="PROSITE" id="PS51828">
    <property type="entry name" value="PTX_2"/>
    <property type="match status" value="1"/>
</dbReference>
<reference key="1">
    <citation type="journal article" date="1993" name="J. Biol. Chem.">
        <title>Serum amyloid P (female protein) of the Syrian hamster. Gene structure and expression.</title>
        <authorList>
            <person name="Rudnick C.M."/>
            <person name="Dowton S.B."/>
        </authorList>
    </citation>
    <scope>NUCLEOTIDE SEQUENCE</scope>
</reference>
<reference key="2">
    <citation type="journal article" date="1985" name="Science">
        <title>Syrian hamster female protein: analysis of female protein primary structure and gene expression.</title>
        <authorList>
            <person name="Dowton S.B."/>
            <person name="Woods D.E."/>
            <person name="Mantzouranis E.C."/>
            <person name="Colten H.R."/>
        </authorList>
    </citation>
    <scope>NUCLEOTIDE SEQUENCE [MRNA] OF 24-234</scope>
</reference>
<reference key="3">
    <citation type="journal article" date="1981" name="J. Exp. Med.">
        <title>Hamster female protein. A new Pentraxin structurally and functionally similar to C-reactive protein and amyloid P component.</title>
        <authorList>
            <person name="Coe J.E."/>
            <person name="Margossian S.S."/>
            <person name="Slayter H.S."/>
            <person name="Sogn J.A."/>
        </authorList>
    </citation>
    <scope>PROTEIN SEQUENCE OF 25-48</scope>
</reference>
<reference key="4">
    <citation type="journal article" date="1994" name="Structure">
        <title>Comparative analyses of pentraxins: implications for protomer assembly and ligand binding.</title>
        <authorList>
            <person name="Srinivasan N."/>
            <person name="White H.E."/>
            <person name="Emsley J."/>
            <person name="Wood S.P."/>
            <person name="Pepys M.B."/>
            <person name="Blundell T.L."/>
        </authorList>
    </citation>
    <scope>3D-STRUCTURE MODELING</scope>
</reference>
<gene>
    <name type="primary">APCS</name>
    <name type="synonym">PTX2</name>
    <name type="synonym">SAP</name>
</gene>
<proteinExistence type="evidence at protein level"/>
<comment type="cofactor">
    <cofactor evidence="1">
        <name>Ca(2+)</name>
        <dbReference type="ChEBI" id="CHEBI:29108"/>
    </cofactor>
    <text evidence="1">Binds 2 calcium ions per subunit.</text>
</comment>
<comment type="subunit">
    <text>Homopentamer. Pentraxin (or pentaxin) have a discoid arrangement of 5 non-covalently bound subunits.</text>
</comment>
<comment type="subcellular location">
    <subcellularLocation>
        <location>Secreted</location>
    </subcellularLocation>
</comment>
<comment type="miscellaneous">
    <text>Plasma concentration of FP are altered by sex steroids and by stimuli that elicit an acute phase response.</text>
</comment>
<comment type="similarity">
    <text evidence="4">Belongs to the pentraxin family.</text>
</comment>
<evidence type="ECO:0000250" key="1"/>
<evidence type="ECO:0000255" key="2"/>
<evidence type="ECO:0000255" key="3">
    <source>
        <dbReference type="PROSITE-ProRule" id="PRU01172"/>
    </source>
</evidence>
<evidence type="ECO:0000305" key="4"/>
<protein>
    <recommendedName>
        <fullName>Serum amyloid P-component</fullName>
    </recommendedName>
    <alternativeName>
        <fullName>Female protein</fullName>
        <shortName>FP</shortName>
    </alternativeName>
    <alternativeName>
        <fullName>SAP(FP)</fullName>
    </alternativeName>
</protein>
<feature type="signal peptide" evidence="2">
    <location>
        <begin position="1"/>
        <end position="22"/>
    </location>
</feature>
<feature type="chain" id="PRO_0000023539" description="Serum amyloid P-component">
    <location>
        <begin position="23"/>
        <end position="234"/>
    </location>
</feature>
<feature type="domain" description="Pentraxin (PTX)" evidence="3">
    <location>
        <begin position="27"/>
        <end position="226"/>
    </location>
</feature>
<feature type="binding site" evidence="1">
    <location>
        <position position="81"/>
    </location>
    <ligand>
        <name>Ca(2+)</name>
        <dbReference type="ChEBI" id="CHEBI:29108"/>
        <label>1</label>
    </ligand>
</feature>
<feature type="binding site" evidence="1">
    <location>
        <position position="158"/>
    </location>
    <ligand>
        <name>Ca(2+)</name>
        <dbReference type="ChEBI" id="CHEBI:29108"/>
        <label>1</label>
    </ligand>
</feature>
<feature type="binding site" evidence="3">
    <location>
        <position position="158"/>
    </location>
    <ligand>
        <name>Ca(2+)</name>
        <dbReference type="ChEBI" id="CHEBI:29108"/>
        <label>2</label>
    </ligand>
</feature>
<feature type="binding site" evidence="1">
    <location>
        <position position="159"/>
    </location>
    <ligand>
        <name>Ca(2+)</name>
        <dbReference type="ChEBI" id="CHEBI:29108"/>
        <label>1</label>
    </ligand>
</feature>
<feature type="binding site" evidence="1">
    <location>
        <position position="160"/>
    </location>
    <ligand>
        <name>Ca(2+)</name>
        <dbReference type="ChEBI" id="CHEBI:29108"/>
        <label>1</label>
    </ligand>
</feature>
<feature type="binding site" evidence="3">
    <location>
        <position position="160"/>
    </location>
    <ligand>
        <name>Ca(2+)</name>
        <dbReference type="ChEBI" id="CHEBI:29108"/>
        <label>2</label>
    </ligand>
</feature>
<feature type="binding site" evidence="3">
    <location>
        <position position="170"/>
    </location>
    <ligand>
        <name>Ca(2+)</name>
        <dbReference type="ChEBI" id="CHEBI:29108"/>
        <label>2</label>
    </ligand>
</feature>
<feature type="glycosylation site" description="N-linked (GlcNAc...) asparagine" evidence="2">
    <location>
        <position position="54"/>
    </location>
</feature>
<feature type="disulfide bond" evidence="3">
    <location>
        <begin position="58"/>
        <end position="117"/>
    </location>
</feature>
<feature type="sequence conflict" description="In Ref. 3; AA sequence." evidence="4" ref="3">
    <original>T</original>
    <variation>S</variation>
    <location>
        <position position="27"/>
    </location>
</feature>
<feature type="sequence conflict" description="In Ref. 3; AA sequence." evidence="4" ref="3">
    <original>K</original>
    <variation>N</variation>
    <location>
        <position position="43"/>
    </location>
</feature>
<feature type="sequence conflict" description="In Ref. 2; AAA36980." evidence="4" ref="2">
    <original>A</original>
    <variation>T</variation>
    <location>
        <position position="76"/>
    </location>
</feature>
<keyword id="KW-0011">Acute phase</keyword>
<keyword id="KW-0034">Amyloid</keyword>
<keyword id="KW-0106">Calcium</keyword>
<keyword id="KW-0903">Direct protein sequencing</keyword>
<keyword id="KW-1015">Disulfide bond</keyword>
<keyword id="KW-0325">Glycoprotein</keyword>
<keyword id="KW-0430">Lectin</keyword>
<keyword id="KW-0479">Metal-binding</keyword>
<keyword id="KW-1185">Reference proteome</keyword>
<keyword id="KW-0964">Secreted</keyword>
<keyword id="KW-0732">Signal</keyword>